<proteinExistence type="evidence at transcript level"/>
<keyword id="KW-0963">Cytoplasm</keyword>
<keyword id="KW-0223">Dioxygenase</keyword>
<keyword id="KW-0284">Flavonoid biosynthesis</keyword>
<keyword id="KW-0408">Iron</keyword>
<keyword id="KW-0479">Metal-binding</keyword>
<keyword id="KW-0560">Oxidoreductase</keyword>
<keyword id="KW-1185">Reference proteome</keyword>
<keyword id="KW-0847">Vitamin C</keyword>
<evidence type="ECO:0000250" key="1"/>
<evidence type="ECO:0000250" key="2">
    <source>
        <dbReference type="UniProtKB" id="Q7XZQ6"/>
    </source>
</evidence>
<evidence type="ECO:0000255" key="3">
    <source>
        <dbReference type="PROSITE-ProRule" id="PRU00805"/>
    </source>
</evidence>
<evidence type="ECO:0000305" key="4"/>
<comment type="function">
    <text>Catalyzes the formation of flavonols from dihydroflavonols. It can act on dihydrokaempferol to produce kaempferol, on dihydroquercetin to produce quercitin and on dihydromyricetin to produce myricetin.</text>
</comment>
<comment type="catalytic activity">
    <reaction evidence="2">
        <text>a (2R,3R)-dihydroflavonol + 2-oxoglutarate + O2 = a flavonol + succinate + CO2 + H2O</text>
        <dbReference type="Rhea" id="RHEA:21088"/>
        <dbReference type="ChEBI" id="CHEBI:15377"/>
        <dbReference type="ChEBI" id="CHEBI:15379"/>
        <dbReference type="ChEBI" id="CHEBI:16526"/>
        <dbReference type="ChEBI" id="CHEBI:16810"/>
        <dbReference type="ChEBI" id="CHEBI:28802"/>
        <dbReference type="ChEBI" id="CHEBI:30031"/>
        <dbReference type="ChEBI" id="CHEBI:138188"/>
        <dbReference type="EC" id="1.14.20.6"/>
    </reaction>
</comment>
<comment type="catalytic activity">
    <reaction evidence="2">
        <text>a (2S)-flavan-4-one + 2-oxoglutarate + O2 = a (2R,3R)-dihydroflavonol + succinate + CO2</text>
        <dbReference type="Rhea" id="RHEA:18621"/>
        <dbReference type="ChEBI" id="CHEBI:15379"/>
        <dbReference type="ChEBI" id="CHEBI:16526"/>
        <dbReference type="ChEBI" id="CHEBI:16810"/>
        <dbReference type="ChEBI" id="CHEBI:30031"/>
        <dbReference type="ChEBI" id="CHEBI:138188"/>
        <dbReference type="ChEBI" id="CHEBI:140377"/>
        <dbReference type="EC" id="1.14.11.9"/>
    </reaction>
</comment>
<comment type="cofactor">
    <cofactor evidence="1">
        <name>Fe cation</name>
        <dbReference type="ChEBI" id="CHEBI:24875"/>
    </cofactor>
    <text evidence="1">Binds 1 Fe cation per subunit.</text>
</comment>
<comment type="cofactor">
    <cofactor evidence="1">
        <name>L-ascorbate</name>
        <dbReference type="ChEBI" id="CHEBI:38290"/>
    </cofactor>
    <text evidence="1">Binds 1 ascorbate molecule per subunit.</text>
</comment>
<comment type="pathway">
    <text>Secondary metabolite biosynthesis; flavonoid biosynthesis.</text>
</comment>
<comment type="subcellular location">
    <subcellularLocation>
        <location>Cytoplasm</location>
    </subcellularLocation>
</comment>
<comment type="developmental stage">
    <text>Temporally expressed during flower development.</text>
</comment>
<comment type="similarity">
    <text evidence="4">Belongs to the iron/ascorbate-dependent oxidoreductase family.</text>
</comment>
<reference key="1">
    <citation type="journal article" date="1997" name="Plant J.">
        <title>Regulation of flavonol biosynthesis during anther and pistil development, and during pollen tube growth in Solanum tuberosum.</title>
        <authorList>
            <person name="van Eldik G.J."/>
            <person name="Ruiter R.K."/>
            <person name="Reijnen W.H."/>
            <person name="van Herpen M.M.A."/>
            <person name="Schrauwen J.A.M."/>
            <person name="Wullems G.J."/>
        </authorList>
    </citation>
    <scope>NUCLEOTIDE SEQUENCE [MRNA]</scope>
    <source>
        <tissue>Pistil</tissue>
    </source>
</reference>
<organism>
    <name type="scientific">Solanum tuberosum</name>
    <name type="common">Potato</name>
    <dbReference type="NCBI Taxonomy" id="4113"/>
    <lineage>
        <taxon>Eukaryota</taxon>
        <taxon>Viridiplantae</taxon>
        <taxon>Streptophyta</taxon>
        <taxon>Embryophyta</taxon>
        <taxon>Tracheophyta</taxon>
        <taxon>Spermatophyta</taxon>
        <taxon>Magnoliopsida</taxon>
        <taxon>eudicotyledons</taxon>
        <taxon>Gunneridae</taxon>
        <taxon>Pentapetalae</taxon>
        <taxon>asterids</taxon>
        <taxon>lamiids</taxon>
        <taxon>Solanales</taxon>
        <taxon>Solanaceae</taxon>
        <taxon>Solanoideae</taxon>
        <taxon>Solaneae</taxon>
        <taxon>Solanum</taxon>
    </lineage>
</organism>
<accession>Q41452</accession>
<feature type="chain" id="PRO_0000067297" description="Flavonol synthase/flavanone 3-hydroxylase">
    <location>
        <begin position="1"/>
        <end position="349"/>
    </location>
</feature>
<feature type="domain" description="Fe2OG dioxygenase" evidence="3">
    <location>
        <begin position="213"/>
        <end position="310"/>
    </location>
</feature>
<feature type="binding site" evidence="3">
    <location>
        <position position="238"/>
    </location>
    <ligand>
        <name>Fe cation</name>
        <dbReference type="ChEBI" id="CHEBI:24875"/>
    </ligand>
</feature>
<feature type="binding site" evidence="3">
    <location>
        <position position="240"/>
    </location>
    <ligand>
        <name>Fe cation</name>
        <dbReference type="ChEBI" id="CHEBI:24875"/>
    </ligand>
</feature>
<feature type="binding site" evidence="3">
    <location>
        <position position="291"/>
    </location>
    <ligand>
        <name>Fe cation</name>
        <dbReference type="ChEBI" id="CHEBI:24875"/>
    </ligand>
</feature>
<protein>
    <recommendedName>
        <fullName>Flavonol synthase/flavanone 3-hydroxylase</fullName>
        <shortName>FLS</shortName>
        <ecNumber evidence="2">1.14.11.9</ecNumber>
        <ecNumber evidence="2">1.14.20.6</ecNumber>
    </recommendedName>
</protein>
<name>FLS_SOLTU</name>
<sequence>MKTIQGQSATTALTMEVARVQAISSITKCMDTIPSEYIRSENEQPAATTLQGVVLEVPVIDISNVDDDEEKLVKEIVEASKEWGIFQVINHGIPDEVIENLQKVGKEFFEEVPQEEKELIAKKPGAQSLEGYGTSLQKEIEGKKGWVDHLFHKIWPPSAINYRYWPKNPPSYREANEEYAKWLRKVADGIFRSLSLGLGLEGHEMMEAAGSEDIVYMLKINYYPPCPRPDLALGVVAHTDMSYITLLVPNEVQVFKDGHWYDVNYIPNAIIVHIGDQVEILSNGKYKSVYHRTTVNKYKTRMSWPVFLEPSSEHEVGPIPNLINEANPPKFKTKKYKDYVYCKLNKLPQ</sequence>
<dbReference type="EC" id="1.14.11.9" evidence="2"/>
<dbReference type="EC" id="1.14.20.6" evidence="2"/>
<dbReference type="EMBL" id="X92178">
    <property type="protein sequence ID" value="CAA63092.1"/>
    <property type="molecule type" value="mRNA"/>
</dbReference>
<dbReference type="PIR" id="T07373">
    <property type="entry name" value="T07373"/>
</dbReference>
<dbReference type="SMR" id="Q41452"/>
<dbReference type="FunCoup" id="Q41452">
    <property type="interactions" value="29"/>
</dbReference>
<dbReference type="STRING" id="4113.Q41452"/>
<dbReference type="PaxDb" id="4113-PGSC0003DMT400036565"/>
<dbReference type="eggNOG" id="KOG0143">
    <property type="taxonomic scope" value="Eukaryota"/>
</dbReference>
<dbReference type="InParanoid" id="Q41452"/>
<dbReference type="UniPathway" id="UPA00154"/>
<dbReference type="Proteomes" id="UP000011115">
    <property type="component" value="Unassembled WGS sequence"/>
</dbReference>
<dbReference type="ExpressionAtlas" id="Q41452">
    <property type="expression patterns" value="baseline"/>
</dbReference>
<dbReference type="GO" id="GO:0005737">
    <property type="term" value="C:cytoplasm"/>
    <property type="evidence" value="ECO:0007669"/>
    <property type="project" value="UniProtKB-SubCell"/>
</dbReference>
<dbReference type="GO" id="GO:0045486">
    <property type="term" value="F:flavanone 3-dioxygenase activity"/>
    <property type="evidence" value="ECO:0007669"/>
    <property type="project" value="UniProtKB-EC"/>
</dbReference>
<dbReference type="GO" id="GO:0045431">
    <property type="term" value="F:flavonol synthase activity"/>
    <property type="evidence" value="ECO:0007669"/>
    <property type="project" value="UniProtKB-EC"/>
</dbReference>
<dbReference type="GO" id="GO:0031418">
    <property type="term" value="F:L-ascorbic acid binding"/>
    <property type="evidence" value="ECO:0007669"/>
    <property type="project" value="UniProtKB-KW"/>
</dbReference>
<dbReference type="GO" id="GO:0046872">
    <property type="term" value="F:metal ion binding"/>
    <property type="evidence" value="ECO:0007669"/>
    <property type="project" value="UniProtKB-KW"/>
</dbReference>
<dbReference type="GO" id="GO:0009805">
    <property type="term" value="P:coumarin biosynthetic process"/>
    <property type="evidence" value="ECO:0007669"/>
    <property type="project" value="UniProtKB-ARBA"/>
</dbReference>
<dbReference type="GO" id="GO:0002238">
    <property type="term" value="P:response to molecule of fungal origin"/>
    <property type="evidence" value="ECO:0007669"/>
    <property type="project" value="UniProtKB-ARBA"/>
</dbReference>
<dbReference type="FunFam" id="2.60.120.330:FF:000009">
    <property type="entry name" value="Flavonol synthase"/>
    <property type="match status" value="1"/>
</dbReference>
<dbReference type="Gene3D" id="2.60.120.330">
    <property type="entry name" value="B-lactam Antibiotic, Isopenicillin N Synthase, Chain"/>
    <property type="match status" value="1"/>
</dbReference>
<dbReference type="InterPro" id="IPR026992">
    <property type="entry name" value="DIOX_N"/>
</dbReference>
<dbReference type="InterPro" id="IPR044861">
    <property type="entry name" value="IPNS-like_FE2OG_OXY"/>
</dbReference>
<dbReference type="InterPro" id="IPR027443">
    <property type="entry name" value="IPNS-like_sf"/>
</dbReference>
<dbReference type="InterPro" id="IPR005123">
    <property type="entry name" value="Oxoglu/Fe-dep_dioxygenase_dom"/>
</dbReference>
<dbReference type="InterPro" id="IPR050295">
    <property type="entry name" value="Plant_2OG-oxidoreductases"/>
</dbReference>
<dbReference type="PANTHER" id="PTHR47991">
    <property type="entry name" value="OXOGLUTARATE/IRON-DEPENDENT DIOXYGENASE"/>
    <property type="match status" value="1"/>
</dbReference>
<dbReference type="Pfam" id="PF03171">
    <property type="entry name" value="2OG-FeII_Oxy"/>
    <property type="match status" value="1"/>
</dbReference>
<dbReference type="Pfam" id="PF14226">
    <property type="entry name" value="DIOX_N"/>
    <property type="match status" value="1"/>
</dbReference>
<dbReference type="SUPFAM" id="SSF51197">
    <property type="entry name" value="Clavaminate synthase-like"/>
    <property type="match status" value="1"/>
</dbReference>
<dbReference type="PROSITE" id="PS51471">
    <property type="entry name" value="FE2OG_OXY"/>
    <property type="match status" value="1"/>
</dbReference>